<gene>
    <name type="primary">Fbl</name>
</gene>
<name>FBRL_RAT</name>
<protein>
    <recommendedName>
        <fullName>rRNA 2'-O-methyltransferase fibrillarin</fullName>
        <ecNumber evidence="2">2.1.1.-</ecNumber>
    </recommendedName>
    <alternativeName>
        <fullName>Histone-glutamine methyltransferase</fullName>
    </alternativeName>
    <alternativeName>
        <fullName>Nucleolar protein 1</fullName>
    </alternativeName>
    <alternativeName>
        <fullName evidence="8">U6 snRNA 2'-O-methyltransferase fibrillarin</fullName>
    </alternativeName>
</protein>
<feature type="chain" id="PRO_0000148509" description="rRNA 2'-O-methyltransferase fibrillarin">
    <location>
        <begin position="1"/>
        <end position="327"/>
    </location>
</feature>
<feature type="region of interest" description="Disordered" evidence="5">
    <location>
        <begin position="1"/>
        <end position="93"/>
    </location>
</feature>
<feature type="compositionally biased region" description="Gly residues" evidence="5">
    <location>
        <begin position="7"/>
        <end position="80"/>
    </location>
</feature>
<feature type="binding site" evidence="4">
    <location>
        <begin position="178"/>
        <end position="179"/>
    </location>
    <ligand>
        <name>S-adenosyl-L-methionine</name>
        <dbReference type="ChEBI" id="CHEBI:59789"/>
    </ligand>
</feature>
<feature type="binding site" evidence="2">
    <location>
        <begin position="197"/>
        <end position="198"/>
    </location>
    <ligand>
        <name>S-adenosyl-L-methionine</name>
        <dbReference type="ChEBI" id="CHEBI:59789"/>
    </ligand>
</feature>
<feature type="binding site" evidence="2">
    <location>
        <begin position="222"/>
        <end position="223"/>
    </location>
    <ligand>
        <name>S-adenosyl-L-methionine</name>
        <dbReference type="ChEBI" id="CHEBI:59789"/>
    </ligand>
</feature>
<feature type="binding site" evidence="2">
    <location>
        <begin position="242"/>
        <end position="245"/>
    </location>
    <ligand>
        <name>S-adenosyl-L-methionine</name>
        <dbReference type="ChEBI" id="CHEBI:59789"/>
    </ligand>
</feature>
<feature type="modified residue" description="Asymmetric dimethylarginine" evidence="7">
    <location>
        <position position="8"/>
    </location>
</feature>
<feature type="modified residue" description="Asymmetric dimethylarginine" evidence="7">
    <location>
        <position position="15"/>
    </location>
</feature>
<feature type="modified residue" description="Asymmetric dimethylarginine" evidence="7">
    <location>
        <position position="21"/>
    </location>
</feature>
<feature type="modified residue" description="Asymmetric dimethylarginine" evidence="7">
    <location>
        <position position="24"/>
    </location>
</feature>
<feature type="modified residue" description="Asymmetric dimethylarginine" evidence="7">
    <location>
        <position position="28"/>
    </location>
</feature>
<feature type="modified residue" description="Asymmetric dimethylarginine" evidence="7">
    <location>
        <position position="31"/>
    </location>
</feature>
<feature type="modified residue" description="N6-acetyllysine" evidence="2">
    <location>
        <position position="108"/>
    </location>
</feature>
<feature type="modified residue" description="Phosphoserine" evidence="2">
    <location>
        <position position="122"/>
    </location>
</feature>
<feature type="modified residue" description="N6-acetyllysine" evidence="2">
    <location>
        <position position="127"/>
    </location>
</feature>
<feature type="modified residue" description="Phosphoserine" evidence="9">
    <location>
        <position position="130"/>
    </location>
</feature>
<feature type="modified residue" description="Phosphoserine" evidence="2">
    <location>
        <position position="132"/>
    </location>
</feature>
<feature type="modified residue" description="N6-acetyllysine" evidence="2">
    <location>
        <position position="211"/>
    </location>
</feature>
<feature type="modified residue" description="N6-acetyllysine" evidence="2">
    <location>
        <position position="212"/>
    </location>
</feature>
<feature type="cross-link" description="Glycyl lysine isopeptide (Lys-Gly) (interchain with G-Cter in SUMO2)" evidence="2">
    <location>
        <position position="90"/>
    </location>
</feature>
<feature type="cross-link" description="Glycyl lysine isopeptide (Lys-Gly) (interchain with G-Cter in SUMO2)" evidence="2">
    <location>
        <position position="108"/>
    </location>
</feature>
<feature type="cross-link" description="Glycyl lysine isopeptide (Lys-Gly) (interchain with G-Cter in SUMO2)" evidence="2">
    <location>
        <position position="115"/>
    </location>
</feature>
<feature type="cross-link" description="Glycyl lysine isopeptide (Lys-Gly) (interchain with G-Cter in SUMO2)" evidence="2">
    <location>
        <position position="137"/>
    </location>
</feature>
<feature type="cross-link" description="Glycyl lysine isopeptide (Lys-Gly) (interchain with G-Cter in SUMO2)" evidence="2">
    <location>
        <position position="149"/>
    </location>
</feature>
<feature type="cross-link" description="Glycyl lysine isopeptide (Lys-Gly) (interchain with G-Cter in SUMO2)" evidence="2">
    <location>
        <position position="164"/>
    </location>
</feature>
<feature type="sequence conflict" description="In Ref. 3; AA sequence." evidence="8" ref="3">
    <original>K</original>
    <variation>D</variation>
    <location>
        <position position="2"/>
    </location>
</feature>
<keyword id="KW-0007">Acetylation</keyword>
<keyword id="KW-0903">Direct protein sequencing</keyword>
<keyword id="KW-1017">Isopeptide bond</keyword>
<keyword id="KW-0488">Methylation</keyword>
<keyword id="KW-0489">Methyltransferase</keyword>
<keyword id="KW-0539">Nucleus</keyword>
<keyword id="KW-0597">Phosphoprotein</keyword>
<keyword id="KW-1185">Reference proteome</keyword>
<keyword id="KW-0687">Ribonucleoprotein</keyword>
<keyword id="KW-0694">RNA-binding</keyword>
<keyword id="KW-0698">rRNA processing</keyword>
<keyword id="KW-0949">S-adenosyl-L-methionine</keyword>
<keyword id="KW-0808">Transferase</keyword>
<keyword id="KW-0832">Ubl conjugation</keyword>
<organism>
    <name type="scientific">Rattus norvegicus</name>
    <name type="common">Rat</name>
    <dbReference type="NCBI Taxonomy" id="10116"/>
    <lineage>
        <taxon>Eukaryota</taxon>
        <taxon>Metazoa</taxon>
        <taxon>Chordata</taxon>
        <taxon>Craniata</taxon>
        <taxon>Vertebrata</taxon>
        <taxon>Euteleostomi</taxon>
        <taxon>Mammalia</taxon>
        <taxon>Eutheria</taxon>
        <taxon>Euarchontoglires</taxon>
        <taxon>Glires</taxon>
        <taxon>Rodentia</taxon>
        <taxon>Myomorpha</taxon>
        <taxon>Muroidea</taxon>
        <taxon>Muridae</taxon>
        <taxon>Murinae</taxon>
        <taxon>Rattus</taxon>
    </lineage>
</organism>
<proteinExistence type="evidence at protein level"/>
<comment type="function">
    <text evidence="1 2">S-adenosyl-L-methionine-dependent methyltransferase that has the ability to methylate both RNAs and proteins. Involved in pre-rRNA processing by catalyzing the site-specific 2'-hydroxyl methylation of ribose moieties in pre-ribosomal RNA (By similarity). Site specificity is provided by a guide RNA that base pairs with the substrate (By similarity). Methylation occurs at a characteristic distance from the sequence involved in base pairing with the guide RNA (By similarity). Probably catalyzes 2'-O-methylation of U6 snRNAs in box C/D RNP complexes. U6 snRNA 2'-O-methylation is required for mRNA splicing fidelity. Also acts as a protein methyltransferase by mediating methylation of 'Gln-105' of histone H2A (H2AQ104me), a modification that impairs binding of the FACT complex and is specifically present at 35S ribosomal DNA locus (By similarity). Part of the small subunit (SSU) processome, first precursor of the small eukaryotic ribosomal subunit. During the assembly of the SSU processome in the nucleolus, many ribosome biogenesis factors, an RNA chaperone and ribosomal proteins associate with the nascent pre-rRNA and work in concert to generate RNA folding, modifications, rearrangements and cleavage as well as targeted degradation of pre-ribosomal RNA by the RNA exosome (By similarity).</text>
</comment>
<comment type="catalytic activity">
    <reaction evidence="2">
        <text>L-glutaminyl-[histone H2A] + S-adenosyl-L-methionine = N(5)-methyl-L-glutaminyl-[histone H2A] + S-adenosyl-L-homocysteine + H(+)</text>
        <dbReference type="Rhea" id="RHEA:50904"/>
        <dbReference type="Rhea" id="RHEA-COMP:12837"/>
        <dbReference type="Rhea" id="RHEA-COMP:12839"/>
        <dbReference type="ChEBI" id="CHEBI:15378"/>
        <dbReference type="ChEBI" id="CHEBI:30011"/>
        <dbReference type="ChEBI" id="CHEBI:57856"/>
        <dbReference type="ChEBI" id="CHEBI:59789"/>
        <dbReference type="ChEBI" id="CHEBI:61891"/>
    </reaction>
</comment>
<comment type="catalytic activity">
    <reaction evidence="1">
        <text>a ribonucleotide in rRNA + S-adenosyl-L-methionine = a 2'-O-methylribonucleotide in rRNA + S-adenosyl-L-homocysteine + H(+)</text>
        <dbReference type="Rhea" id="RHEA:48628"/>
        <dbReference type="Rhea" id="RHEA-COMP:12164"/>
        <dbReference type="Rhea" id="RHEA-COMP:12165"/>
        <dbReference type="ChEBI" id="CHEBI:15378"/>
        <dbReference type="ChEBI" id="CHEBI:57856"/>
        <dbReference type="ChEBI" id="CHEBI:59789"/>
        <dbReference type="ChEBI" id="CHEBI:90675"/>
        <dbReference type="ChEBI" id="CHEBI:90676"/>
    </reaction>
    <physiologicalReaction direction="left-to-right" evidence="1">
        <dbReference type="Rhea" id="RHEA:48629"/>
    </physiologicalReaction>
</comment>
<comment type="catalytic activity">
    <reaction evidence="2">
        <text>a ribonucleotide in U6 snRNA + S-adenosyl-L-methionine = a 2'-O-methylribonucleotide in U6 snRNA + S-adenosyl-L-homocysteine + H(+)</text>
        <dbReference type="Rhea" id="RHEA:63088"/>
        <dbReference type="Rhea" id="RHEA-COMP:16262"/>
        <dbReference type="Rhea" id="RHEA-COMP:16263"/>
        <dbReference type="ChEBI" id="CHEBI:15378"/>
        <dbReference type="ChEBI" id="CHEBI:57856"/>
        <dbReference type="ChEBI" id="CHEBI:59789"/>
        <dbReference type="ChEBI" id="CHEBI:90675"/>
        <dbReference type="ChEBI" id="CHEBI:90676"/>
    </reaction>
    <physiologicalReaction direction="left-to-right" evidence="2">
        <dbReference type="Rhea" id="RHEA:63089"/>
    </physiologicalReaction>
</comment>
<comment type="subunit">
    <text evidence="2 6">Component of box C/D small nucleolar ribonucleoprotein (snoRNP) particles that contain SNU13, FBL, NOP5 and NOP56, plus a guide RNA. It is associated with the U3, U8, U13, X and Y small nuclear RNAs. Component of several ribosomal and nucleolar protein complexes. Part of the small subunit (SSU) processome, composed of more than 70 proteins and the RNA chaperone small nucleolar RNA (snoRNA) U3 (By similarity). Interacts with PRMT5 and UTP20. Interacts with DDX5 and C1QBP. Interacts with NOL11. Interacts with PIH1D1. Interacts with RRP1B (By similarity). Interacts with NOLC1 (PubMed:10679015). Interacts with SDE2 (By similarity). Interacts with NOP2 and NOP56 (By similarity).</text>
</comment>
<comment type="subcellular location">
    <subcellularLocation>
        <location evidence="7">Nucleus</location>
        <location evidence="7">Nucleolus</location>
    </subcellularLocation>
    <subcellularLocation>
        <location evidence="3">Nucleus</location>
        <location evidence="3">Nucleoplasm</location>
    </subcellularLocation>
    <text>Fibrillar region of the nucleolus.</text>
</comment>
<comment type="PTM">
    <text evidence="2">Ubiquitinated. Ubiquitination leads to proteasomal degradation. Deubiquitinated by USP36.</text>
</comment>
<comment type="PTM">
    <text evidence="7">By homology to other fibrillarins, some or all of the N-terminal domain arginines are modified to asymmetric dimethylarginine (DMA).</text>
</comment>
<comment type="PTM">
    <text evidence="2">Acetylated by CREBBP/CBP, preventing methylation of 'Gln-105' of histone H2A (H2AQ104me), without affecting rRNA methylation. Deacetylation by SIRT7 restores methylation of 'Gln-105' of histone H2A (H2AQ104me).</text>
</comment>
<comment type="similarity">
    <text evidence="8">Belongs to the methyltransferase superfamily. Fibrillarin family.</text>
</comment>
<evidence type="ECO:0000250" key="1">
    <source>
        <dbReference type="UniProtKB" id="P15646"/>
    </source>
</evidence>
<evidence type="ECO:0000250" key="2">
    <source>
        <dbReference type="UniProtKB" id="P22087"/>
    </source>
</evidence>
<evidence type="ECO:0000250" key="3">
    <source>
        <dbReference type="UniProtKB" id="P35550"/>
    </source>
</evidence>
<evidence type="ECO:0000250" key="4">
    <source>
        <dbReference type="UniProtKB" id="Q9Y9U3"/>
    </source>
</evidence>
<evidence type="ECO:0000256" key="5">
    <source>
        <dbReference type="SAM" id="MobiDB-lite"/>
    </source>
</evidence>
<evidence type="ECO:0000269" key="6">
    <source>
    </source>
</evidence>
<evidence type="ECO:0000269" key="7">
    <source>
    </source>
</evidence>
<evidence type="ECO:0000305" key="8"/>
<evidence type="ECO:0007744" key="9">
    <source>
    </source>
</evidence>
<accession>P22509</accession>
<accession>Q4KLH8</accession>
<sequence length="327" mass="34222">MKPGFSPRGGGFGGRGGFGDRGGRGGGRGGRGGFGGGRGGFGGGGRGRGGGGGGFRGRGGGGGRGGGFQSGGGRGRGGGRGGKRGNQSGKNVMVEPHRHEGVFICRGKEDALVTKNLVPGESVYGEKRVSISEGDDKIEYRAWNPFRSKLAAAILGGVDQIHIKPGAKVLYLGAASGTTVSHVSDIVGPDGLVYAVEFSHRSGRDLINLAKKRTNIIPVIEDARHPHKYRMLIAMVDVIFADVAQPDQTRIVALNAHTFLRNGGHFVISIKANCIDSTASAEAVFASEVKKMQQENMKPQEQLTLEPYERDHAVVVGVYRPPPKAKN</sequence>
<dbReference type="EC" id="2.1.1.-" evidence="2"/>
<dbReference type="EMBL" id="BC099198">
    <property type="protein sequence ID" value="AAH99198.1"/>
    <property type="molecule type" value="mRNA"/>
</dbReference>
<dbReference type="PIR" id="A23887">
    <property type="entry name" value="A23887"/>
</dbReference>
<dbReference type="RefSeq" id="NP_001020814.1">
    <property type="nucleotide sequence ID" value="NM_001025643.1"/>
</dbReference>
<dbReference type="SMR" id="P22509"/>
<dbReference type="BioGRID" id="253952">
    <property type="interactions" value="3"/>
</dbReference>
<dbReference type="FunCoup" id="P22509">
    <property type="interactions" value="3467"/>
</dbReference>
<dbReference type="IntAct" id="P22509">
    <property type="interactions" value="3"/>
</dbReference>
<dbReference type="STRING" id="10116.ENSRNOP00000026021"/>
<dbReference type="iPTMnet" id="P22509"/>
<dbReference type="PhosphoSitePlus" id="P22509"/>
<dbReference type="jPOST" id="P22509"/>
<dbReference type="PaxDb" id="10116-ENSRNOP00000026021"/>
<dbReference type="GeneID" id="292747"/>
<dbReference type="KEGG" id="rno:292747"/>
<dbReference type="UCSC" id="RGD:1305542">
    <property type="organism name" value="rat"/>
</dbReference>
<dbReference type="AGR" id="RGD:1305542"/>
<dbReference type="CTD" id="2091"/>
<dbReference type="RGD" id="1305542">
    <property type="gene designation" value="Fbl"/>
</dbReference>
<dbReference type="VEuPathDB" id="HostDB:ENSRNOG00000019229"/>
<dbReference type="eggNOG" id="KOG1596">
    <property type="taxonomic scope" value="Eukaryota"/>
</dbReference>
<dbReference type="HOGENOM" id="CLU_059055_1_0_1"/>
<dbReference type="InParanoid" id="P22509"/>
<dbReference type="OrthoDB" id="75194at9989"/>
<dbReference type="PhylomeDB" id="P22509"/>
<dbReference type="TreeFam" id="TF300639"/>
<dbReference type="Reactome" id="R-RNO-6791226">
    <property type="pathway name" value="Major pathway of rRNA processing in the nucleolus and cytosol"/>
</dbReference>
<dbReference type="PRO" id="PR:P22509"/>
<dbReference type="Proteomes" id="UP000002494">
    <property type="component" value="Chromosome 1"/>
</dbReference>
<dbReference type="Bgee" id="ENSRNOG00000019229">
    <property type="expression patterns" value="Expressed in spleen and 19 other cell types or tissues"/>
</dbReference>
<dbReference type="GO" id="GO:0031428">
    <property type="term" value="C:box C/D methylation guide snoRNP complex"/>
    <property type="evidence" value="ECO:0000318"/>
    <property type="project" value="GO_Central"/>
</dbReference>
<dbReference type="GO" id="GO:0015030">
    <property type="term" value="C:Cajal body"/>
    <property type="evidence" value="ECO:0000314"/>
    <property type="project" value="RGD"/>
</dbReference>
<dbReference type="GO" id="GO:0005694">
    <property type="term" value="C:chromosome"/>
    <property type="evidence" value="ECO:0000314"/>
    <property type="project" value="RGD"/>
</dbReference>
<dbReference type="GO" id="GO:0001651">
    <property type="term" value="C:dense fibrillar component"/>
    <property type="evidence" value="ECO:0000314"/>
    <property type="project" value="UniProtKB"/>
</dbReference>
<dbReference type="GO" id="GO:0001652">
    <property type="term" value="C:granular component"/>
    <property type="evidence" value="ECO:0000266"/>
    <property type="project" value="RGD"/>
</dbReference>
<dbReference type="GO" id="GO:0005730">
    <property type="term" value="C:nucleolus"/>
    <property type="evidence" value="ECO:0000250"/>
    <property type="project" value="UniProtKB"/>
</dbReference>
<dbReference type="GO" id="GO:0005654">
    <property type="term" value="C:nucleoplasm"/>
    <property type="evidence" value="ECO:0000314"/>
    <property type="project" value="RGD"/>
</dbReference>
<dbReference type="GO" id="GO:0005634">
    <property type="term" value="C:nucleus"/>
    <property type="evidence" value="ECO:0000266"/>
    <property type="project" value="RGD"/>
</dbReference>
<dbReference type="GO" id="GO:0032040">
    <property type="term" value="C:small-subunit processome"/>
    <property type="evidence" value="ECO:0000250"/>
    <property type="project" value="UniProtKB"/>
</dbReference>
<dbReference type="GO" id="GO:0051117">
    <property type="term" value="F:ATPase binding"/>
    <property type="evidence" value="ECO:0000266"/>
    <property type="project" value="RGD"/>
</dbReference>
<dbReference type="GO" id="GO:1990259">
    <property type="term" value="F:histone H2AQ104 methyltransferase activity"/>
    <property type="evidence" value="ECO:0000250"/>
    <property type="project" value="UniProtKB"/>
</dbReference>
<dbReference type="GO" id="GO:0003723">
    <property type="term" value="F:RNA binding"/>
    <property type="evidence" value="ECO:0000266"/>
    <property type="project" value="RGD"/>
</dbReference>
<dbReference type="GO" id="GO:0008649">
    <property type="term" value="F:rRNA methyltransferase activity"/>
    <property type="evidence" value="ECO:0000318"/>
    <property type="project" value="GO_Central"/>
</dbReference>
<dbReference type="GO" id="GO:0001094">
    <property type="term" value="F:TFIID-class transcription factor complex binding"/>
    <property type="evidence" value="ECO:0000266"/>
    <property type="project" value="RGD"/>
</dbReference>
<dbReference type="GO" id="GO:0180021">
    <property type="term" value="F:U6 snRNA 2'-O-ribose methyltransferase activity"/>
    <property type="evidence" value="ECO:0007669"/>
    <property type="project" value="RHEA"/>
</dbReference>
<dbReference type="GO" id="GO:0000494">
    <property type="term" value="P:box C/D sno(s)RNA 3'-end processing"/>
    <property type="evidence" value="ECO:0000318"/>
    <property type="project" value="GO_Central"/>
</dbReference>
<dbReference type="GO" id="GO:0042274">
    <property type="term" value="P:ribosomal small subunit biogenesis"/>
    <property type="evidence" value="ECO:0000250"/>
    <property type="project" value="UniProtKB"/>
</dbReference>
<dbReference type="GO" id="GO:0031167">
    <property type="term" value="P:rRNA methylation"/>
    <property type="evidence" value="ECO:0000250"/>
    <property type="project" value="UniProtKB"/>
</dbReference>
<dbReference type="GO" id="GO:0016074">
    <property type="term" value="P:sno(s)RNA metabolic process"/>
    <property type="evidence" value="ECO:0000266"/>
    <property type="project" value="RGD"/>
</dbReference>
<dbReference type="GO" id="GO:0048254">
    <property type="term" value="P:snoRNA localization"/>
    <property type="evidence" value="ECO:0000266"/>
    <property type="project" value="RGD"/>
</dbReference>
<dbReference type="FunFam" id="3.30.200.20:FF:000056">
    <property type="entry name" value="Fibrillarin like 1"/>
    <property type="match status" value="1"/>
</dbReference>
<dbReference type="FunFam" id="3.40.50.150:FF:000001">
    <property type="entry name" value="Fibrillarin like 1"/>
    <property type="match status" value="1"/>
</dbReference>
<dbReference type="Gene3D" id="3.30.200.20">
    <property type="entry name" value="Phosphorylase Kinase, domain 1"/>
    <property type="match status" value="1"/>
</dbReference>
<dbReference type="Gene3D" id="3.40.50.150">
    <property type="entry name" value="Vaccinia Virus protein VP39"/>
    <property type="match status" value="1"/>
</dbReference>
<dbReference type="HAMAP" id="MF_00351">
    <property type="entry name" value="RNA_methyltransf_FlpA"/>
    <property type="match status" value="1"/>
</dbReference>
<dbReference type="InterPro" id="IPR000692">
    <property type="entry name" value="Fibrillarin"/>
</dbReference>
<dbReference type="InterPro" id="IPR020813">
    <property type="entry name" value="Fibrillarin_CS"/>
</dbReference>
<dbReference type="InterPro" id="IPR029063">
    <property type="entry name" value="SAM-dependent_MTases_sf"/>
</dbReference>
<dbReference type="NCBIfam" id="NF003276">
    <property type="entry name" value="PRK04266.1-2"/>
    <property type="match status" value="1"/>
</dbReference>
<dbReference type="PANTHER" id="PTHR10335:SF4">
    <property type="entry name" value="RRNA 2'-O-METHYLTRANSFERASE FIBRILLARIN"/>
    <property type="match status" value="1"/>
</dbReference>
<dbReference type="PANTHER" id="PTHR10335">
    <property type="entry name" value="RRNA 2-O-METHYLTRANSFERASE FIBRILLARIN"/>
    <property type="match status" value="1"/>
</dbReference>
<dbReference type="Pfam" id="PF01269">
    <property type="entry name" value="Fibrillarin"/>
    <property type="match status" value="1"/>
</dbReference>
<dbReference type="PRINTS" id="PR00052">
    <property type="entry name" value="FIBRILLARIN"/>
</dbReference>
<dbReference type="SMART" id="SM01206">
    <property type="entry name" value="Fibrillarin"/>
    <property type="match status" value="1"/>
</dbReference>
<dbReference type="SUPFAM" id="SSF53335">
    <property type="entry name" value="S-adenosyl-L-methionine-dependent methyltransferases"/>
    <property type="match status" value="1"/>
</dbReference>
<dbReference type="PROSITE" id="PS00566">
    <property type="entry name" value="FIBRILLARIN"/>
    <property type="match status" value="1"/>
</dbReference>
<reference key="1">
    <citation type="journal article" date="2004" name="Genome Res.">
        <title>The status, quality, and expansion of the NIH full-length cDNA project: the Mammalian Gene Collection (MGC).</title>
        <authorList>
            <consortium name="The MGC Project Team"/>
        </authorList>
    </citation>
    <scope>NUCLEOTIDE SEQUENCE [LARGE SCALE MRNA]</scope>
    <source>
        <tissue>Thymus</tissue>
    </source>
</reference>
<reference key="2">
    <citation type="journal article" date="1985" name="J. Biol. Chem.">
        <title>Purification and partial characterization of a nucleolar scleroderma antigen (Mr = 34,000; pI, 8.5) rich in NG,NG-dimethylarginine.</title>
        <authorList>
            <person name="Lischwe M.A."/>
            <person name="Ochs R.L."/>
            <person name="Reddy R."/>
            <person name="Cook R.G."/>
            <person name="Yeoman L.C."/>
            <person name="Tan E.M."/>
            <person name="Reichlin M."/>
            <person name="Busch H."/>
        </authorList>
    </citation>
    <scope>PROTEIN SEQUENCE OF 1-31</scope>
    <scope>SUBCELLULAR LOCATION</scope>
    <scope>METHYLATION AT ARG-8; ARG-15; ARG-21; ARG-24; ARG-28 AND ARG-31</scope>
</reference>
<reference key="3">
    <citation type="journal article" date="2000" name="Mol. Biol. Cell">
        <title>Conserved composition of mammalian box H/ACA and box C/D small nucleolar ribonucleoprotein particles and their interaction with the common factor Nopp140.</title>
        <authorList>
            <person name="Yang Y."/>
            <person name="Isaac C."/>
            <person name="Wang C."/>
            <person name="Dragon F."/>
            <person name="Pogacic V."/>
            <person name="Meier U.T."/>
        </authorList>
    </citation>
    <scope>PROTEIN SEQUENCE OF 1-28</scope>
    <scope>INTERACTION WITH NOLC1</scope>
</reference>
<reference key="4">
    <citation type="journal article" date="2012" name="Nat. Commun.">
        <title>Quantitative maps of protein phosphorylation sites across 14 different rat organs and tissues.</title>
        <authorList>
            <person name="Lundby A."/>
            <person name="Secher A."/>
            <person name="Lage K."/>
            <person name="Nordsborg N.B."/>
            <person name="Dmytriyev A."/>
            <person name="Lundby C."/>
            <person name="Olsen J.V."/>
        </authorList>
    </citation>
    <scope>PHOSPHORYLATION [LARGE SCALE ANALYSIS] AT SER-130</scope>
    <scope>IDENTIFICATION BY MASS SPECTROMETRY [LARGE SCALE ANALYSIS]</scope>
</reference>